<evidence type="ECO:0000255" key="1">
    <source>
        <dbReference type="HAMAP-Rule" id="MF_01521"/>
    </source>
</evidence>
<protein>
    <recommendedName>
        <fullName evidence="1">Putative manganese efflux pump MntP</fullName>
    </recommendedName>
</protein>
<proteinExistence type="inferred from homology"/>
<comment type="function">
    <text evidence="1">Probably functions as a manganese efflux pump.</text>
</comment>
<comment type="subcellular location">
    <subcellularLocation>
        <location evidence="1">Cell inner membrane</location>
        <topology evidence="1">Multi-pass membrane protein</topology>
    </subcellularLocation>
</comment>
<comment type="similarity">
    <text evidence="1">Belongs to the MntP (TC 9.B.29) family.</text>
</comment>
<accession>Q4FVS9</accession>
<keyword id="KW-0997">Cell inner membrane</keyword>
<keyword id="KW-1003">Cell membrane</keyword>
<keyword id="KW-0406">Ion transport</keyword>
<keyword id="KW-0464">Manganese</keyword>
<keyword id="KW-0472">Membrane</keyword>
<keyword id="KW-1185">Reference proteome</keyword>
<keyword id="KW-0812">Transmembrane</keyword>
<keyword id="KW-1133">Transmembrane helix</keyword>
<keyword id="KW-0813">Transport</keyword>
<dbReference type="EMBL" id="CP000082">
    <property type="protein sequence ID" value="AAZ17879.1"/>
    <property type="molecule type" value="Genomic_DNA"/>
</dbReference>
<dbReference type="KEGG" id="par:Psyc_0005"/>
<dbReference type="eggNOG" id="COG1971">
    <property type="taxonomic scope" value="Bacteria"/>
</dbReference>
<dbReference type="HOGENOM" id="CLU_096410_3_0_6"/>
<dbReference type="Proteomes" id="UP000000546">
    <property type="component" value="Chromosome"/>
</dbReference>
<dbReference type="GO" id="GO:0005886">
    <property type="term" value="C:plasma membrane"/>
    <property type="evidence" value="ECO:0007669"/>
    <property type="project" value="UniProtKB-SubCell"/>
</dbReference>
<dbReference type="GO" id="GO:0005384">
    <property type="term" value="F:manganese ion transmembrane transporter activity"/>
    <property type="evidence" value="ECO:0007669"/>
    <property type="project" value="UniProtKB-UniRule"/>
</dbReference>
<dbReference type="HAMAP" id="MF_01521">
    <property type="entry name" value="MntP_pump"/>
    <property type="match status" value="1"/>
</dbReference>
<dbReference type="InterPro" id="IPR003810">
    <property type="entry name" value="Mntp/YtaF"/>
</dbReference>
<dbReference type="InterPro" id="IPR022929">
    <property type="entry name" value="Put_MntP"/>
</dbReference>
<dbReference type="PANTHER" id="PTHR35529">
    <property type="entry name" value="MANGANESE EFFLUX PUMP MNTP-RELATED"/>
    <property type="match status" value="1"/>
</dbReference>
<dbReference type="PANTHER" id="PTHR35529:SF1">
    <property type="entry name" value="MANGANESE EFFLUX PUMP MNTP-RELATED"/>
    <property type="match status" value="1"/>
</dbReference>
<dbReference type="Pfam" id="PF02659">
    <property type="entry name" value="Mntp"/>
    <property type="match status" value="1"/>
</dbReference>
<gene>
    <name evidence="1" type="primary">mntP</name>
    <name type="ordered locus">Psyc_0005</name>
</gene>
<sequence>MDIEMIEVILLAIALAMDAFAVSIGLGAKSQKQSSAYVLRLAVYAALYFGIAQGVMPLIGYLLGAVLLGWLATAAPWIGGGILIVLGAKMLYEAFNGEIEAVLEDGFDENIRKKINHRMMFTLAIATSIDAMAAGFTLNLLALNAWLACLIIAIVTAGFGFFGIYLGKSSGTWLEDKAEILGGLVLIAIGVKVMLFS</sequence>
<feature type="chain" id="PRO_0000292540" description="Putative manganese efflux pump MntP">
    <location>
        <begin position="1"/>
        <end position="197"/>
    </location>
</feature>
<feature type="transmembrane region" description="Helical" evidence="1">
    <location>
        <begin position="8"/>
        <end position="28"/>
    </location>
</feature>
<feature type="transmembrane region" description="Helical" evidence="1">
    <location>
        <begin position="43"/>
        <end position="63"/>
    </location>
</feature>
<feature type="transmembrane region" description="Helical" evidence="1">
    <location>
        <begin position="66"/>
        <end position="86"/>
    </location>
</feature>
<feature type="transmembrane region" description="Helical" evidence="1">
    <location>
        <begin position="123"/>
        <end position="143"/>
    </location>
</feature>
<feature type="transmembrane region" description="Helical" evidence="1">
    <location>
        <begin position="146"/>
        <end position="166"/>
    </location>
</feature>
<feature type="transmembrane region" description="Helical" evidence="1">
    <location>
        <begin position="177"/>
        <end position="197"/>
    </location>
</feature>
<organism>
    <name type="scientific">Psychrobacter arcticus (strain DSM 17307 / VKM B-2377 / 273-4)</name>
    <dbReference type="NCBI Taxonomy" id="259536"/>
    <lineage>
        <taxon>Bacteria</taxon>
        <taxon>Pseudomonadati</taxon>
        <taxon>Pseudomonadota</taxon>
        <taxon>Gammaproteobacteria</taxon>
        <taxon>Moraxellales</taxon>
        <taxon>Moraxellaceae</taxon>
        <taxon>Psychrobacter</taxon>
    </lineage>
</organism>
<reference key="1">
    <citation type="journal article" date="2010" name="Appl. Environ. Microbiol.">
        <title>The genome sequence of Psychrobacter arcticus 273-4, a psychroactive Siberian permafrost bacterium, reveals mechanisms for adaptation to low-temperature growth.</title>
        <authorList>
            <person name="Ayala-del-Rio H.L."/>
            <person name="Chain P.S."/>
            <person name="Grzymski J.J."/>
            <person name="Ponder M.A."/>
            <person name="Ivanova N."/>
            <person name="Bergholz P.W."/>
            <person name="Di Bartolo G."/>
            <person name="Hauser L."/>
            <person name="Land M."/>
            <person name="Bakermans C."/>
            <person name="Rodrigues D."/>
            <person name="Klappenbach J."/>
            <person name="Zarka D."/>
            <person name="Larimer F."/>
            <person name="Richardson P."/>
            <person name="Murray A."/>
            <person name="Thomashow M."/>
            <person name="Tiedje J.M."/>
        </authorList>
    </citation>
    <scope>NUCLEOTIDE SEQUENCE [LARGE SCALE GENOMIC DNA]</scope>
    <source>
        <strain>DSM 17307 / VKM B-2377 / 273-4</strain>
    </source>
</reference>
<name>MNTP_PSYA2</name>